<evidence type="ECO:0000250" key="1">
    <source>
        <dbReference type="UniProtKB" id="P76318"/>
    </source>
</evidence>
<evidence type="ECO:0000250" key="2">
    <source>
        <dbReference type="UniProtKB" id="Q8R1M0"/>
    </source>
</evidence>
<evidence type="ECO:0000250" key="3">
    <source>
        <dbReference type="UniProtKB" id="Q96FZ2"/>
    </source>
</evidence>
<evidence type="ECO:0000305" key="4"/>
<keyword id="KW-0190">Covalent protein-DNA linkage</keyword>
<keyword id="KW-0227">DNA damage</keyword>
<keyword id="KW-0238">DNA-binding</keyword>
<keyword id="KW-0378">Hydrolase</keyword>
<keyword id="KW-0456">Lyase</keyword>
<keyword id="KW-0645">Protease</keyword>
<keyword id="KW-1185">Reference proteome</keyword>
<keyword id="KW-0742">SOS response</keyword>
<proteinExistence type="inferred from homology"/>
<gene>
    <name type="primary">yoaM</name>
    <name type="ordered locus">BSU18660</name>
</gene>
<comment type="function">
    <text evidence="1 2">Sensor of abasic sites in single-stranded DNA (ssDNA) required to preserve genome integrity by promoting error-free repair of abasic sites (By similarity). Recognizes and binds abasic sites in ssDNA at replication forks and chemically modifies the lesion by forming a covalent cross-link with DNA: forms a stable thiazolidine linkage between a ring-opened abasic site and the alpha-amino and sulfhydryl substituents of its N-terminal catalytic cysteine residue (By similarity). The DNA-protein cross-link is then reversed: able to catalyze the reversal of the thiazolidine cross-link and cycle between a cross-link and a non-cross-linked state depending on DNA context: mediates self-reversal of the thiazolidine cross-link in double stranded DNA (By similarity). May act as a protease: mediates autocatalytic processing of its N-terminal methionine in order to expose the catalytic cysteine (By similarity).</text>
</comment>
<comment type="activity regulation">
    <text evidence="3">Formation and reversal of DNA-protein cross-link depends on DNA context. Catalyzes formation of the thiazolidine linkage in presence of abasic sites in single-stranded DNA. Mediates the reversal of the thiazolidine cross-link in presence of double stranded DNA.</text>
</comment>
<comment type="domain">
    <text evidence="1 3">The N-terminal catalytic Cys-2 residue forms a thiazolidine linkage to a ring-opened DNA abasic site (By similarity). Glu-106 catalyzes reversal of the thiazolidine linkage; self-reversal is favoured by duplex DNA formation (By similarity). Glu-106 is also involved in sensing abasic sites in single-stranded DNA (ssDNA). His-163 stabilizes the abasic sites by forming a hydrogen bond with the O4' hydroxyl group (By similarity).</text>
</comment>
<comment type="similarity">
    <text evidence="4">Belongs to the SOS response-associated peptidase family.</text>
</comment>
<feature type="initiator methionine" description="Removed" evidence="2">
    <location>
        <position position="1"/>
    </location>
</feature>
<feature type="chain" id="PRO_0000164401" description="Abasic site processing protein YoaM">
    <location>
        <begin position="2"/>
        <end position="227"/>
    </location>
</feature>
<feature type="active site" description="Nucleophile" evidence="3">
    <location>
        <position position="2"/>
    </location>
</feature>
<feature type="active site" evidence="3">
    <location>
        <position position="106"/>
    </location>
</feature>
<feature type="site" description="Required for sensing abasic sites" evidence="1">
    <location>
        <position position="106"/>
    </location>
</feature>
<feature type="site" description="Required to stabilize abasic sites" evidence="1">
    <location>
        <position position="163"/>
    </location>
</feature>
<feature type="modified residue" description="Thiazolidine linkage to a ring-opened DNA abasic site" evidence="1">
    <location>
        <position position="2"/>
    </location>
</feature>
<protein>
    <recommendedName>
        <fullName evidence="4">Abasic site processing protein YoaM</fullName>
        <ecNumber evidence="1">4.-.-.-</ecNumber>
    </recommendedName>
    <alternativeName>
        <fullName>Peptidase YoaM</fullName>
        <ecNumber evidence="2">3.4.-.-</ecNumber>
    </alternativeName>
</protein>
<sequence>MCGRFTLYSAFDDIIDQFDIDQFFPKGEYQPSYNVAPSQNILAIINDGSNNRLGKLRWGLIPPWAKDEKIGYKMINARAETITEKPAFRRPLVSKRCIIPADSFYEWKRLDSKTKIPMRIKLKSSALFAFAGLYEKWSTHQGYPLYTCTIITTEPNEFMKDIHDRMPVILAHDHEKEWLNPKNTSPDYLQSLLLPYDADDMEAYQVSSLVNSPKNNSAELLDAENHM</sequence>
<organism>
    <name type="scientific">Bacillus subtilis (strain 168)</name>
    <dbReference type="NCBI Taxonomy" id="224308"/>
    <lineage>
        <taxon>Bacteria</taxon>
        <taxon>Bacillati</taxon>
        <taxon>Bacillota</taxon>
        <taxon>Bacilli</taxon>
        <taxon>Bacillales</taxon>
        <taxon>Bacillaceae</taxon>
        <taxon>Bacillus</taxon>
    </lineage>
</organism>
<accession>O34906</accession>
<accession>Q796F3</accession>
<dbReference type="EC" id="4.-.-.-" evidence="1"/>
<dbReference type="EC" id="3.4.-.-" evidence="2"/>
<dbReference type="EMBL" id="AF027868">
    <property type="protein sequence ID" value="AAB84423.1"/>
    <property type="molecule type" value="Genomic_DNA"/>
</dbReference>
<dbReference type="EMBL" id="AL009126">
    <property type="protein sequence ID" value="CAB13758.1"/>
    <property type="molecule type" value="Genomic_DNA"/>
</dbReference>
<dbReference type="PIR" id="F69896">
    <property type="entry name" value="F69896"/>
</dbReference>
<dbReference type="RefSeq" id="NP_389747.1">
    <property type="nucleotide sequence ID" value="NC_000964.3"/>
</dbReference>
<dbReference type="RefSeq" id="WP_004399422.1">
    <property type="nucleotide sequence ID" value="NZ_OZ025638.1"/>
</dbReference>
<dbReference type="SMR" id="O34906"/>
<dbReference type="FunCoup" id="O34906">
    <property type="interactions" value="436"/>
</dbReference>
<dbReference type="STRING" id="224308.BSU18660"/>
<dbReference type="PaxDb" id="224308-BSU18660"/>
<dbReference type="EnsemblBacteria" id="CAB13758">
    <property type="protein sequence ID" value="CAB13758"/>
    <property type="gene ID" value="BSU_18660"/>
</dbReference>
<dbReference type="GeneID" id="940112"/>
<dbReference type="KEGG" id="bsu:BSU18660"/>
<dbReference type="PATRIC" id="fig|224308.179.peg.2034"/>
<dbReference type="eggNOG" id="COG2135">
    <property type="taxonomic scope" value="Bacteria"/>
</dbReference>
<dbReference type="InParanoid" id="O34906"/>
<dbReference type="OrthoDB" id="9782620at2"/>
<dbReference type="PhylomeDB" id="O34906"/>
<dbReference type="BioCyc" id="BSUB:BSU18660-MONOMER"/>
<dbReference type="Proteomes" id="UP000001570">
    <property type="component" value="Chromosome"/>
</dbReference>
<dbReference type="GO" id="GO:0016829">
    <property type="term" value="F:lyase activity"/>
    <property type="evidence" value="ECO:0007669"/>
    <property type="project" value="UniProtKB-KW"/>
</dbReference>
<dbReference type="GO" id="GO:0008233">
    <property type="term" value="F:peptidase activity"/>
    <property type="evidence" value="ECO:0007669"/>
    <property type="project" value="UniProtKB-KW"/>
</dbReference>
<dbReference type="GO" id="GO:0003697">
    <property type="term" value="F:single-stranded DNA binding"/>
    <property type="evidence" value="ECO:0007669"/>
    <property type="project" value="InterPro"/>
</dbReference>
<dbReference type="GO" id="GO:0106300">
    <property type="term" value="P:protein-DNA covalent cross-linking repair"/>
    <property type="evidence" value="ECO:0007669"/>
    <property type="project" value="InterPro"/>
</dbReference>
<dbReference type="GO" id="GO:0006508">
    <property type="term" value="P:proteolysis"/>
    <property type="evidence" value="ECO:0007669"/>
    <property type="project" value="UniProtKB-KW"/>
</dbReference>
<dbReference type="GO" id="GO:0009432">
    <property type="term" value="P:SOS response"/>
    <property type="evidence" value="ECO:0007669"/>
    <property type="project" value="UniProtKB-KW"/>
</dbReference>
<dbReference type="Gene3D" id="3.90.1680.10">
    <property type="entry name" value="SOS response associated peptidase-like"/>
    <property type="match status" value="1"/>
</dbReference>
<dbReference type="InterPro" id="IPR003738">
    <property type="entry name" value="SRAP"/>
</dbReference>
<dbReference type="InterPro" id="IPR036590">
    <property type="entry name" value="SRAP-like"/>
</dbReference>
<dbReference type="PANTHER" id="PTHR13604:SF0">
    <property type="entry name" value="ABASIC SITE PROCESSING PROTEIN HMCES"/>
    <property type="match status" value="1"/>
</dbReference>
<dbReference type="PANTHER" id="PTHR13604">
    <property type="entry name" value="DC12-RELATED"/>
    <property type="match status" value="1"/>
</dbReference>
<dbReference type="Pfam" id="PF02586">
    <property type="entry name" value="SRAP"/>
    <property type="match status" value="1"/>
</dbReference>
<dbReference type="SUPFAM" id="SSF143081">
    <property type="entry name" value="BB1717-like"/>
    <property type="match status" value="1"/>
</dbReference>
<name>YOAM_BACSU</name>
<reference key="1">
    <citation type="submission" date="1997-11" db="EMBL/GenBank/DDBJ databases">
        <title>Sequence analysis of the Bacillus subtilis chromosome region between the terC and odhAB loci cloned in a yeast artificial chromosome.</title>
        <authorList>
            <person name="Lapidus A."/>
            <person name="Galleron N."/>
            <person name="Sorokin A."/>
            <person name="Ehrlich S.D."/>
        </authorList>
    </citation>
    <scope>NUCLEOTIDE SEQUENCE [GENOMIC DNA]</scope>
</reference>
<reference key="2">
    <citation type="journal article" date="1997" name="Nature">
        <title>The complete genome sequence of the Gram-positive bacterium Bacillus subtilis.</title>
        <authorList>
            <person name="Kunst F."/>
            <person name="Ogasawara N."/>
            <person name="Moszer I."/>
            <person name="Albertini A.M."/>
            <person name="Alloni G."/>
            <person name="Azevedo V."/>
            <person name="Bertero M.G."/>
            <person name="Bessieres P."/>
            <person name="Bolotin A."/>
            <person name="Borchert S."/>
            <person name="Borriss R."/>
            <person name="Boursier L."/>
            <person name="Brans A."/>
            <person name="Braun M."/>
            <person name="Brignell S.C."/>
            <person name="Bron S."/>
            <person name="Brouillet S."/>
            <person name="Bruschi C.V."/>
            <person name="Caldwell B."/>
            <person name="Capuano V."/>
            <person name="Carter N.M."/>
            <person name="Choi S.-K."/>
            <person name="Codani J.-J."/>
            <person name="Connerton I.F."/>
            <person name="Cummings N.J."/>
            <person name="Daniel R.A."/>
            <person name="Denizot F."/>
            <person name="Devine K.M."/>
            <person name="Duesterhoeft A."/>
            <person name="Ehrlich S.D."/>
            <person name="Emmerson P.T."/>
            <person name="Entian K.-D."/>
            <person name="Errington J."/>
            <person name="Fabret C."/>
            <person name="Ferrari E."/>
            <person name="Foulger D."/>
            <person name="Fritz C."/>
            <person name="Fujita M."/>
            <person name="Fujita Y."/>
            <person name="Fuma S."/>
            <person name="Galizzi A."/>
            <person name="Galleron N."/>
            <person name="Ghim S.-Y."/>
            <person name="Glaser P."/>
            <person name="Goffeau A."/>
            <person name="Golightly E.J."/>
            <person name="Grandi G."/>
            <person name="Guiseppi G."/>
            <person name="Guy B.J."/>
            <person name="Haga K."/>
            <person name="Haiech J."/>
            <person name="Harwood C.R."/>
            <person name="Henaut A."/>
            <person name="Hilbert H."/>
            <person name="Holsappel S."/>
            <person name="Hosono S."/>
            <person name="Hullo M.-F."/>
            <person name="Itaya M."/>
            <person name="Jones L.-M."/>
            <person name="Joris B."/>
            <person name="Karamata D."/>
            <person name="Kasahara Y."/>
            <person name="Klaerr-Blanchard M."/>
            <person name="Klein C."/>
            <person name="Kobayashi Y."/>
            <person name="Koetter P."/>
            <person name="Koningstein G."/>
            <person name="Krogh S."/>
            <person name="Kumano M."/>
            <person name="Kurita K."/>
            <person name="Lapidus A."/>
            <person name="Lardinois S."/>
            <person name="Lauber J."/>
            <person name="Lazarevic V."/>
            <person name="Lee S.-M."/>
            <person name="Levine A."/>
            <person name="Liu H."/>
            <person name="Masuda S."/>
            <person name="Mauel C."/>
            <person name="Medigue C."/>
            <person name="Medina N."/>
            <person name="Mellado R.P."/>
            <person name="Mizuno M."/>
            <person name="Moestl D."/>
            <person name="Nakai S."/>
            <person name="Noback M."/>
            <person name="Noone D."/>
            <person name="O'Reilly M."/>
            <person name="Ogawa K."/>
            <person name="Ogiwara A."/>
            <person name="Oudega B."/>
            <person name="Park S.-H."/>
            <person name="Parro V."/>
            <person name="Pohl T.M."/>
            <person name="Portetelle D."/>
            <person name="Porwollik S."/>
            <person name="Prescott A.M."/>
            <person name="Presecan E."/>
            <person name="Pujic P."/>
            <person name="Purnelle B."/>
            <person name="Rapoport G."/>
            <person name="Rey M."/>
            <person name="Reynolds S."/>
            <person name="Rieger M."/>
            <person name="Rivolta C."/>
            <person name="Rocha E."/>
            <person name="Roche B."/>
            <person name="Rose M."/>
            <person name="Sadaie Y."/>
            <person name="Sato T."/>
            <person name="Scanlan E."/>
            <person name="Schleich S."/>
            <person name="Schroeter R."/>
            <person name="Scoffone F."/>
            <person name="Sekiguchi J."/>
            <person name="Sekowska A."/>
            <person name="Seror S.J."/>
            <person name="Serror P."/>
            <person name="Shin B.-S."/>
            <person name="Soldo B."/>
            <person name="Sorokin A."/>
            <person name="Tacconi E."/>
            <person name="Takagi T."/>
            <person name="Takahashi H."/>
            <person name="Takemaru K."/>
            <person name="Takeuchi M."/>
            <person name="Tamakoshi A."/>
            <person name="Tanaka T."/>
            <person name="Terpstra P."/>
            <person name="Tognoni A."/>
            <person name="Tosato V."/>
            <person name="Uchiyama S."/>
            <person name="Vandenbol M."/>
            <person name="Vannier F."/>
            <person name="Vassarotti A."/>
            <person name="Viari A."/>
            <person name="Wambutt R."/>
            <person name="Wedler E."/>
            <person name="Wedler H."/>
            <person name="Weitzenegger T."/>
            <person name="Winters P."/>
            <person name="Wipat A."/>
            <person name="Yamamoto H."/>
            <person name="Yamane K."/>
            <person name="Yasumoto K."/>
            <person name="Yata K."/>
            <person name="Yoshida K."/>
            <person name="Yoshikawa H.-F."/>
            <person name="Zumstein E."/>
            <person name="Yoshikawa H."/>
            <person name="Danchin A."/>
        </authorList>
    </citation>
    <scope>NUCLEOTIDE SEQUENCE [LARGE SCALE GENOMIC DNA]</scope>
    <source>
        <strain>168</strain>
    </source>
</reference>
<reference key="3">
    <citation type="journal article" date="2013" name="Biol. Direct">
        <title>Novel autoproteolytic and DNA-damage sensing components in the bacterial SOS response and oxidized methylcytosine-induced eukaryotic DNA demethylation systems.</title>
        <authorList>
            <person name="Aravind L."/>
            <person name="Anand S."/>
            <person name="Iyer L.M."/>
        </authorList>
    </citation>
    <scope>IDENTIFICATION</scope>
</reference>